<reference key="1">
    <citation type="submission" date="2007-11" db="EMBL/GenBank/DDBJ databases">
        <title>Complete sequence of Delftia acidovorans DSM 14801 / SPH-1.</title>
        <authorList>
            <person name="Copeland A."/>
            <person name="Lucas S."/>
            <person name="Lapidus A."/>
            <person name="Barry K."/>
            <person name="Glavina del Rio T."/>
            <person name="Dalin E."/>
            <person name="Tice H."/>
            <person name="Pitluck S."/>
            <person name="Lowry S."/>
            <person name="Clum A."/>
            <person name="Schmutz J."/>
            <person name="Larimer F."/>
            <person name="Land M."/>
            <person name="Hauser L."/>
            <person name="Kyrpides N."/>
            <person name="Kim E."/>
            <person name="Schleheck D."/>
            <person name="Richardson P."/>
        </authorList>
    </citation>
    <scope>NUCLEOTIDE SEQUENCE [LARGE SCALE GENOMIC DNA]</scope>
    <source>
        <strain>DSM 14801 / SPH-1</strain>
    </source>
</reference>
<proteinExistence type="inferred from homology"/>
<protein>
    <recommendedName>
        <fullName evidence="1">Phospho-N-acetylmuramoyl-pentapeptide-transferase</fullName>
        <ecNumber evidence="1">2.7.8.13</ecNumber>
    </recommendedName>
    <alternativeName>
        <fullName evidence="1">UDP-MurNAc-pentapeptide phosphotransferase</fullName>
    </alternativeName>
</protein>
<name>MRAY_DELAS</name>
<keyword id="KW-0131">Cell cycle</keyword>
<keyword id="KW-0132">Cell division</keyword>
<keyword id="KW-0997">Cell inner membrane</keyword>
<keyword id="KW-1003">Cell membrane</keyword>
<keyword id="KW-0133">Cell shape</keyword>
<keyword id="KW-0961">Cell wall biogenesis/degradation</keyword>
<keyword id="KW-0460">Magnesium</keyword>
<keyword id="KW-0472">Membrane</keyword>
<keyword id="KW-0479">Metal-binding</keyword>
<keyword id="KW-0573">Peptidoglycan synthesis</keyword>
<keyword id="KW-1185">Reference proteome</keyword>
<keyword id="KW-0808">Transferase</keyword>
<keyword id="KW-0812">Transmembrane</keyword>
<keyword id="KW-1133">Transmembrane helix</keyword>
<dbReference type="EC" id="2.7.8.13" evidence="1"/>
<dbReference type="EMBL" id="CP000884">
    <property type="protein sequence ID" value="ABX34111.1"/>
    <property type="molecule type" value="Genomic_DNA"/>
</dbReference>
<dbReference type="RefSeq" id="WP_012203397.1">
    <property type="nucleotide sequence ID" value="NC_010002.1"/>
</dbReference>
<dbReference type="SMR" id="A9BUK3"/>
<dbReference type="STRING" id="398578.Daci_1467"/>
<dbReference type="GeneID" id="24117771"/>
<dbReference type="KEGG" id="dac:Daci_1467"/>
<dbReference type="eggNOG" id="COG0472">
    <property type="taxonomic scope" value="Bacteria"/>
</dbReference>
<dbReference type="HOGENOM" id="CLU_023982_0_0_4"/>
<dbReference type="UniPathway" id="UPA00219"/>
<dbReference type="Proteomes" id="UP000000784">
    <property type="component" value="Chromosome"/>
</dbReference>
<dbReference type="GO" id="GO:0005886">
    <property type="term" value="C:plasma membrane"/>
    <property type="evidence" value="ECO:0007669"/>
    <property type="project" value="UniProtKB-SubCell"/>
</dbReference>
<dbReference type="GO" id="GO:0046872">
    <property type="term" value="F:metal ion binding"/>
    <property type="evidence" value="ECO:0007669"/>
    <property type="project" value="UniProtKB-KW"/>
</dbReference>
<dbReference type="GO" id="GO:0008963">
    <property type="term" value="F:phospho-N-acetylmuramoyl-pentapeptide-transferase activity"/>
    <property type="evidence" value="ECO:0007669"/>
    <property type="project" value="UniProtKB-UniRule"/>
</dbReference>
<dbReference type="GO" id="GO:0051992">
    <property type="term" value="F:UDP-N-acetylmuramoyl-L-alanyl-D-glutamyl-meso-2,6-diaminopimelyl-D-alanyl-D-alanine:undecaprenyl-phosphate transferase activity"/>
    <property type="evidence" value="ECO:0007669"/>
    <property type="project" value="RHEA"/>
</dbReference>
<dbReference type="GO" id="GO:0051301">
    <property type="term" value="P:cell division"/>
    <property type="evidence" value="ECO:0007669"/>
    <property type="project" value="UniProtKB-KW"/>
</dbReference>
<dbReference type="GO" id="GO:0071555">
    <property type="term" value="P:cell wall organization"/>
    <property type="evidence" value="ECO:0007669"/>
    <property type="project" value="UniProtKB-KW"/>
</dbReference>
<dbReference type="GO" id="GO:0009252">
    <property type="term" value="P:peptidoglycan biosynthetic process"/>
    <property type="evidence" value="ECO:0007669"/>
    <property type="project" value="UniProtKB-UniRule"/>
</dbReference>
<dbReference type="GO" id="GO:0008360">
    <property type="term" value="P:regulation of cell shape"/>
    <property type="evidence" value="ECO:0007669"/>
    <property type="project" value="UniProtKB-KW"/>
</dbReference>
<dbReference type="CDD" id="cd06852">
    <property type="entry name" value="GT_MraY"/>
    <property type="match status" value="1"/>
</dbReference>
<dbReference type="HAMAP" id="MF_00038">
    <property type="entry name" value="MraY"/>
    <property type="match status" value="1"/>
</dbReference>
<dbReference type="InterPro" id="IPR000715">
    <property type="entry name" value="Glycosyl_transferase_4"/>
</dbReference>
<dbReference type="InterPro" id="IPR003524">
    <property type="entry name" value="PNAcMuramoyl-5peptid_Trfase"/>
</dbReference>
<dbReference type="InterPro" id="IPR018480">
    <property type="entry name" value="PNAcMuramoyl-5peptid_Trfase_CS"/>
</dbReference>
<dbReference type="NCBIfam" id="TIGR00445">
    <property type="entry name" value="mraY"/>
    <property type="match status" value="1"/>
</dbReference>
<dbReference type="PANTHER" id="PTHR22926">
    <property type="entry name" value="PHOSPHO-N-ACETYLMURAMOYL-PENTAPEPTIDE-TRANSFERASE"/>
    <property type="match status" value="1"/>
</dbReference>
<dbReference type="PANTHER" id="PTHR22926:SF5">
    <property type="entry name" value="PHOSPHO-N-ACETYLMURAMOYL-PENTAPEPTIDE-TRANSFERASE HOMOLOG"/>
    <property type="match status" value="1"/>
</dbReference>
<dbReference type="Pfam" id="PF00953">
    <property type="entry name" value="Glycos_transf_4"/>
    <property type="match status" value="1"/>
</dbReference>
<dbReference type="Pfam" id="PF10555">
    <property type="entry name" value="MraY_sig1"/>
    <property type="match status" value="1"/>
</dbReference>
<dbReference type="PROSITE" id="PS01347">
    <property type="entry name" value="MRAY_1"/>
    <property type="match status" value="1"/>
</dbReference>
<dbReference type="PROSITE" id="PS01348">
    <property type="entry name" value="MRAY_2"/>
    <property type="match status" value="1"/>
</dbReference>
<accession>A9BUK3</accession>
<organism>
    <name type="scientific">Delftia acidovorans (strain DSM 14801 / SPH-1)</name>
    <dbReference type="NCBI Taxonomy" id="398578"/>
    <lineage>
        <taxon>Bacteria</taxon>
        <taxon>Pseudomonadati</taxon>
        <taxon>Pseudomonadota</taxon>
        <taxon>Betaproteobacteria</taxon>
        <taxon>Burkholderiales</taxon>
        <taxon>Comamonadaceae</taxon>
        <taxon>Delftia</taxon>
    </lineage>
</organism>
<gene>
    <name evidence="1" type="primary">mraY</name>
    <name type="ordered locus">Daci_1467</name>
</gene>
<evidence type="ECO:0000255" key="1">
    <source>
        <dbReference type="HAMAP-Rule" id="MF_00038"/>
    </source>
</evidence>
<comment type="function">
    <text evidence="1">Catalyzes the initial step of the lipid cycle reactions in the biosynthesis of the cell wall peptidoglycan: transfers peptidoglycan precursor phospho-MurNAc-pentapeptide from UDP-MurNAc-pentapeptide onto the lipid carrier undecaprenyl phosphate, yielding undecaprenyl-pyrophosphoryl-MurNAc-pentapeptide, known as lipid I.</text>
</comment>
<comment type="catalytic activity">
    <reaction evidence="1">
        <text>UDP-N-acetyl-alpha-D-muramoyl-L-alanyl-gamma-D-glutamyl-meso-2,6-diaminopimeloyl-D-alanyl-D-alanine + di-trans,octa-cis-undecaprenyl phosphate = di-trans,octa-cis-undecaprenyl diphospho-N-acetyl-alpha-D-muramoyl-L-alanyl-D-glutamyl-meso-2,6-diaminopimeloyl-D-alanyl-D-alanine + UMP</text>
        <dbReference type="Rhea" id="RHEA:28386"/>
        <dbReference type="ChEBI" id="CHEBI:57865"/>
        <dbReference type="ChEBI" id="CHEBI:60392"/>
        <dbReference type="ChEBI" id="CHEBI:61386"/>
        <dbReference type="ChEBI" id="CHEBI:61387"/>
        <dbReference type="EC" id="2.7.8.13"/>
    </reaction>
</comment>
<comment type="cofactor">
    <cofactor evidence="1">
        <name>Mg(2+)</name>
        <dbReference type="ChEBI" id="CHEBI:18420"/>
    </cofactor>
</comment>
<comment type="pathway">
    <text evidence="1">Cell wall biogenesis; peptidoglycan biosynthesis.</text>
</comment>
<comment type="subcellular location">
    <subcellularLocation>
        <location evidence="1">Cell inner membrane</location>
        <topology evidence="1">Multi-pass membrane protein</topology>
    </subcellularLocation>
</comment>
<comment type="similarity">
    <text evidence="1">Belongs to the glycosyltransferase 4 family. MraY subfamily.</text>
</comment>
<feature type="chain" id="PRO_1000090618" description="Phospho-N-acetylmuramoyl-pentapeptide-transferase">
    <location>
        <begin position="1"/>
        <end position="392"/>
    </location>
</feature>
<feature type="transmembrane region" description="Helical" evidence="1">
    <location>
        <begin position="24"/>
        <end position="44"/>
    </location>
</feature>
<feature type="transmembrane region" description="Helical" evidence="1">
    <location>
        <begin position="76"/>
        <end position="96"/>
    </location>
</feature>
<feature type="transmembrane region" description="Helical" evidence="1">
    <location>
        <begin position="100"/>
        <end position="120"/>
    </location>
</feature>
<feature type="transmembrane region" description="Helical" evidence="1">
    <location>
        <begin position="137"/>
        <end position="157"/>
    </location>
</feature>
<feature type="transmembrane region" description="Helical" evidence="1">
    <location>
        <begin position="170"/>
        <end position="190"/>
    </location>
</feature>
<feature type="transmembrane region" description="Helical" evidence="1">
    <location>
        <begin position="193"/>
        <end position="213"/>
    </location>
</feature>
<feature type="transmembrane region" description="Helical" evidence="1">
    <location>
        <begin position="225"/>
        <end position="245"/>
    </location>
</feature>
<feature type="transmembrane region" description="Helical" evidence="1">
    <location>
        <begin position="262"/>
        <end position="282"/>
    </location>
</feature>
<feature type="transmembrane region" description="Helical" evidence="1">
    <location>
        <begin position="289"/>
        <end position="309"/>
    </location>
</feature>
<feature type="transmembrane region" description="Helical" evidence="1">
    <location>
        <begin position="314"/>
        <end position="334"/>
    </location>
</feature>
<feature type="transmembrane region" description="Helical" evidence="1">
    <location>
        <begin position="369"/>
        <end position="389"/>
    </location>
</feature>
<sequence>MLLMLSQWLQGLSPEFGFLRVFQYLTMRAVMAALTALVIGLLAGPRLIRMLTSLKIGQPVRGYGMETHLAKSGTPTMGGALILLSIAVSTLLWFDLSNRFVWIVLLVTLGFGTIGWVDDWRKVVNKDPEGMRSGEKYFWQSVIGLLAALYLVFCISENSNAQVFELFVTWVQSGFALDLPPKAGLLVPFFKEVSYPLGVLGFVIMTYLVIVGASNAVNLTDGLDGLAIMPVIMVGSALGIFAYVTGNAGYAKYLLFPHIPGSGELLVYCAAMAGAGLAFLWFNAHPAQVFMGDVGALALGASLGTIAVIVRQEIVLAIMGGIFVVEALSVMLQVTWFKFTKKRYGQGRRLLKMAPLHHHFEKSGWKETQVVIRFWIITMLLCLLGLSTLKLR</sequence>